<sequence length="63" mass="6820">MNFSRILFFVFACFVALASVSAAPEPRWKVFKKIEKVGRNIRDGVIKAGPAIAVVGQAKALGK</sequence>
<organism>
    <name type="scientific">Hyphantria cunea</name>
    <name type="common">Fall webworm moth</name>
    <name type="synonym">Phalaena cunea</name>
    <dbReference type="NCBI Taxonomy" id="39466"/>
    <lineage>
        <taxon>Eukaryota</taxon>
        <taxon>Metazoa</taxon>
        <taxon>Ecdysozoa</taxon>
        <taxon>Arthropoda</taxon>
        <taxon>Hexapoda</taxon>
        <taxon>Insecta</taxon>
        <taxon>Pterygota</taxon>
        <taxon>Neoptera</taxon>
        <taxon>Endopterygota</taxon>
        <taxon>Lepidoptera</taxon>
        <taxon>Glossata</taxon>
        <taxon>Ditrysia</taxon>
        <taxon>Noctuoidea</taxon>
        <taxon>Erebidae</taxon>
        <taxon>Arctiinae</taxon>
        <taxon>Hyphantria</taxon>
    </lineage>
</organism>
<accession>P50722</accession>
<dbReference type="EMBL" id="U23831">
    <property type="protein sequence ID" value="AAB39000.1"/>
    <property type="molecule type" value="mRNA"/>
</dbReference>
<dbReference type="SMR" id="P50722"/>
<dbReference type="GO" id="GO:0005576">
    <property type="term" value="C:extracellular region"/>
    <property type="evidence" value="ECO:0007669"/>
    <property type="project" value="UniProtKB-SubCell"/>
</dbReference>
<dbReference type="GO" id="GO:0019731">
    <property type="term" value="P:antibacterial humoral response"/>
    <property type="evidence" value="ECO:0007669"/>
    <property type="project" value="InterPro"/>
</dbReference>
<dbReference type="GO" id="GO:0050830">
    <property type="term" value="P:defense response to Gram-positive bacterium"/>
    <property type="evidence" value="ECO:0007669"/>
    <property type="project" value="UniProtKB-ARBA"/>
</dbReference>
<dbReference type="GO" id="GO:0045087">
    <property type="term" value="P:innate immune response"/>
    <property type="evidence" value="ECO:0007669"/>
    <property type="project" value="UniProtKB-KW"/>
</dbReference>
<dbReference type="InterPro" id="IPR000875">
    <property type="entry name" value="Cecropin"/>
</dbReference>
<dbReference type="Pfam" id="PF00272">
    <property type="entry name" value="Cecropin"/>
    <property type="match status" value="1"/>
</dbReference>
<dbReference type="PROSITE" id="PS00268">
    <property type="entry name" value="CECROPIN"/>
    <property type="match status" value="1"/>
</dbReference>
<name>CE3F_HYPCU</name>
<evidence type="ECO:0000255" key="1"/>
<evidence type="ECO:0000305" key="2"/>
<keyword id="KW-0027">Amidation</keyword>
<keyword id="KW-0044">Antibiotic</keyword>
<keyword id="KW-0929">Antimicrobial</keyword>
<keyword id="KW-0391">Immunity</keyword>
<keyword id="KW-0399">Innate immunity</keyword>
<keyword id="KW-0964">Secreted</keyword>
<keyword id="KW-0732">Signal</keyword>
<proteinExistence type="inferred from homology"/>
<reference key="1">
    <citation type="submission" date="1995-03" db="EMBL/GenBank/DDBJ databases">
        <authorList>
            <person name="Park S.-S."/>
            <person name="Shin S.W."/>
            <person name="Kim M.K."/>
            <person name="Park D.S."/>
            <person name="Oh H.W."/>
            <person name="Park H.Y."/>
        </authorList>
    </citation>
    <scope>NUCLEOTIDE SEQUENCE [MRNA]</scope>
</reference>
<protein>
    <recommendedName>
        <fullName>Hyphancin-3F</fullName>
    </recommendedName>
    <alternativeName>
        <fullName>Cecropin-A2</fullName>
    </alternativeName>
    <alternativeName>
        <fullName>Hyphancin-IIIF</fullName>
    </alternativeName>
</protein>
<comment type="function">
    <text>Has antibacterial activity.</text>
</comment>
<comment type="subcellular location">
    <subcellularLocation>
        <location>Secreted</location>
    </subcellularLocation>
</comment>
<comment type="similarity">
    <text evidence="2">Belongs to the cecropin family.</text>
</comment>
<feature type="signal peptide" evidence="1">
    <location>
        <begin position="1"/>
        <end position="22"/>
    </location>
</feature>
<feature type="propeptide" id="PRO_0000004869" description="Removed by a dipeptidylpeptidase" evidence="1">
    <location>
        <begin position="23"/>
        <end position="26"/>
    </location>
</feature>
<feature type="chain" id="PRO_0000004870" description="Hyphancin-3F">
    <location>
        <begin position="27"/>
        <end position="61"/>
    </location>
</feature>
<feature type="modified residue" description="Leucine amide" evidence="1">
    <location>
        <position position="61"/>
    </location>
</feature>